<gene>
    <name type="ordered locus">At2g33655</name>
    <name type="ORF">F4P9</name>
</gene>
<feature type="chain" id="PRO_0000283395" description="Putative F-box protein At2g33655">
    <location>
        <begin position="1"/>
        <end position="150"/>
    </location>
</feature>
<feature type="domain" description="F-box" evidence="1">
    <location>
        <begin position="1"/>
        <end position="47"/>
    </location>
</feature>
<dbReference type="EMBL" id="AC002332">
    <property type="status" value="NOT_ANNOTATED_CDS"/>
    <property type="molecule type" value="Genomic_DNA"/>
</dbReference>
<dbReference type="EMBL" id="CP002685">
    <property type="protein sequence ID" value="AEC08866.1"/>
    <property type="molecule type" value="Genomic_DNA"/>
</dbReference>
<dbReference type="RefSeq" id="NP_850216.1">
    <property type="nucleotide sequence ID" value="NM_179885.1"/>
</dbReference>
<dbReference type="SMR" id="Q3EBP1"/>
<dbReference type="STRING" id="3702.Q3EBP1"/>
<dbReference type="PaxDb" id="3702-AT2G33655.1"/>
<dbReference type="EnsemblPlants" id="AT2G33655.1">
    <property type="protein sequence ID" value="AT2G33655.1"/>
    <property type="gene ID" value="AT2G33655"/>
</dbReference>
<dbReference type="GeneID" id="817931"/>
<dbReference type="Gramene" id="AT2G33655.1">
    <property type="protein sequence ID" value="AT2G33655.1"/>
    <property type="gene ID" value="AT2G33655"/>
</dbReference>
<dbReference type="KEGG" id="ath:AT2G33655"/>
<dbReference type="Araport" id="AT2G33655"/>
<dbReference type="TAIR" id="AT2G33655"/>
<dbReference type="HOGENOM" id="CLU_1449584_0_0_1"/>
<dbReference type="InParanoid" id="Q3EBP1"/>
<dbReference type="PhylomeDB" id="Q3EBP1"/>
<dbReference type="PRO" id="PR:Q3EBP1"/>
<dbReference type="Proteomes" id="UP000006548">
    <property type="component" value="Chromosome 2"/>
</dbReference>
<dbReference type="ExpressionAtlas" id="Q3EBP1">
    <property type="expression patterns" value="baseline"/>
</dbReference>
<dbReference type="CDD" id="cd22157">
    <property type="entry name" value="F-box_AtFBW1-like"/>
    <property type="match status" value="1"/>
</dbReference>
<dbReference type="Gene3D" id="1.20.1280.50">
    <property type="match status" value="1"/>
</dbReference>
<dbReference type="InterPro" id="IPR006527">
    <property type="entry name" value="F-box-assoc_dom_typ1"/>
</dbReference>
<dbReference type="InterPro" id="IPR036047">
    <property type="entry name" value="F-box-like_dom_sf"/>
</dbReference>
<dbReference type="InterPro" id="IPR001810">
    <property type="entry name" value="F-box_dom"/>
</dbReference>
<dbReference type="Pfam" id="PF00646">
    <property type="entry name" value="F-box"/>
    <property type="match status" value="1"/>
</dbReference>
<dbReference type="Pfam" id="PF07734">
    <property type="entry name" value="FBA_1"/>
    <property type="match status" value="1"/>
</dbReference>
<dbReference type="SMART" id="SM00256">
    <property type="entry name" value="FBOX"/>
    <property type="match status" value="1"/>
</dbReference>
<dbReference type="SUPFAM" id="SSF81383">
    <property type="entry name" value="F-box domain"/>
    <property type="match status" value="1"/>
</dbReference>
<dbReference type="PROSITE" id="PS50181">
    <property type="entry name" value="FBOX"/>
    <property type="match status" value="1"/>
</dbReference>
<proteinExistence type="predicted"/>
<protein>
    <recommendedName>
        <fullName>Putative F-box protein At2g33655</fullName>
    </recommendedName>
</protein>
<organism>
    <name type="scientific">Arabidopsis thaliana</name>
    <name type="common">Mouse-ear cress</name>
    <dbReference type="NCBI Taxonomy" id="3702"/>
    <lineage>
        <taxon>Eukaryota</taxon>
        <taxon>Viridiplantae</taxon>
        <taxon>Streptophyta</taxon>
        <taxon>Embryophyta</taxon>
        <taxon>Tracheophyta</taxon>
        <taxon>Spermatophyta</taxon>
        <taxon>Magnoliopsida</taxon>
        <taxon>eudicotyledons</taxon>
        <taxon>Gunneridae</taxon>
        <taxon>Pentapetalae</taxon>
        <taxon>rosids</taxon>
        <taxon>malvids</taxon>
        <taxon>Brassicales</taxon>
        <taxon>Brassicaceae</taxon>
        <taxon>Camelineae</taxon>
        <taxon>Arabidopsis</taxon>
    </lineage>
</organism>
<name>FB124_ARATH</name>
<keyword id="KW-1185">Reference proteome</keyword>
<reference key="1">
    <citation type="journal article" date="1999" name="Nature">
        <title>Sequence and analysis of chromosome 2 of the plant Arabidopsis thaliana.</title>
        <authorList>
            <person name="Lin X."/>
            <person name="Kaul S."/>
            <person name="Rounsley S.D."/>
            <person name="Shea T.P."/>
            <person name="Benito M.-I."/>
            <person name="Town C.D."/>
            <person name="Fujii C.Y."/>
            <person name="Mason T.M."/>
            <person name="Bowman C.L."/>
            <person name="Barnstead M.E."/>
            <person name="Feldblyum T.V."/>
            <person name="Buell C.R."/>
            <person name="Ketchum K.A."/>
            <person name="Lee J.J."/>
            <person name="Ronning C.M."/>
            <person name="Koo H.L."/>
            <person name="Moffat K.S."/>
            <person name="Cronin L.A."/>
            <person name="Shen M."/>
            <person name="Pai G."/>
            <person name="Van Aken S."/>
            <person name="Umayam L."/>
            <person name="Tallon L.J."/>
            <person name="Gill J.E."/>
            <person name="Adams M.D."/>
            <person name="Carrera A.J."/>
            <person name="Creasy T.H."/>
            <person name="Goodman H.M."/>
            <person name="Somerville C.R."/>
            <person name="Copenhaver G.P."/>
            <person name="Preuss D."/>
            <person name="Nierman W.C."/>
            <person name="White O."/>
            <person name="Eisen J.A."/>
            <person name="Salzberg S.L."/>
            <person name="Fraser C.M."/>
            <person name="Venter J.C."/>
        </authorList>
    </citation>
    <scope>NUCLEOTIDE SEQUENCE [LARGE SCALE GENOMIC DNA]</scope>
    <source>
        <strain>cv. Columbia</strain>
    </source>
</reference>
<reference key="2">
    <citation type="journal article" date="2017" name="Plant J.">
        <title>Araport11: a complete reannotation of the Arabidopsis thaliana reference genome.</title>
        <authorList>
            <person name="Cheng C.Y."/>
            <person name="Krishnakumar V."/>
            <person name="Chan A.P."/>
            <person name="Thibaud-Nissen F."/>
            <person name="Schobel S."/>
            <person name="Town C.D."/>
        </authorList>
    </citation>
    <scope>GENOME REANNOTATION</scope>
    <source>
        <strain>cv. Columbia</strain>
    </source>
</reference>
<evidence type="ECO:0000255" key="1">
    <source>
        <dbReference type="PROSITE-ProRule" id="PRU00080"/>
    </source>
</evidence>
<accession>Q3EBP1</accession>
<sequence length="150" mass="17113">MEKMSDLPRELVEEILSRVPVKSMREVRVTCKTWNALSKHISKAEAAREGEFLGIAKKKFCRNSFLLFSIPWLRVLIVVDFSNAMKDAMKDAMKEIRSSFQAMRLIVANYDIATLSAFGEEQLAVLFQPFEGYVMEIWVTTKIEPSAVSS</sequence>